<dbReference type="EMBL" id="FO080358">
    <property type="protein sequence ID" value="CCD63133.1"/>
    <property type="molecule type" value="Genomic_DNA"/>
</dbReference>
<dbReference type="PIR" id="T16483">
    <property type="entry name" value="T16483"/>
</dbReference>
<dbReference type="RefSeq" id="NP_498202.1">
    <property type="nucleotide sequence ID" value="NM_065801.8"/>
</dbReference>
<dbReference type="SMR" id="P98080"/>
<dbReference type="BioGRID" id="41001">
    <property type="interactions" value="22"/>
</dbReference>
<dbReference type="DIP" id="DIP-27219N"/>
<dbReference type="FunCoup" id="P98080">
    <property type="interactions" value="456"/>
</dbReference>
<dbReference type="STRING" id="6239.F56D2.1c.1"/>
<dbReference type="PaxDb" id="6239-F56D2.1"/>
<dbReference type="PeptideAtlas" id="P98080"/>
<dbReference type="EnsemblMetazoa" id="F56D2.1a.1">
    <property type="protein sequence ID" value="F56D2.1a.1"/>
    <property type="gene ID" value="WBGene00018963"/>
</dbReference>
<dbReference type="GeneID" id="175772"/>
<dbReference type="KEGG" id="cel:CELE_F56D2.1"/>
<dbReference type="AGR" id="WB:WBGene00018963"/>
<dbReference type="CTD" id="175772"/>
<dbReference type="WormBase" id="F56D2.1a">
    <property type="protein sequence ID" value="CE11226"/>
    <property type="gene ID" value="WBGene00018963"/>
    <property type="gene designation" value="ucr-1"/>
</dbReference>
<dbReference type="eggNOG" id="KOG0960">
    <property type="taxonomic scope" value="Eukaryota"/>
</dbReference>
<dbReference type="HOGENOM" id="CLU_009902_4_0_1"/>
<dbReference type="InParanoid" id="P98080"/>
<dbReference type="OMA" id="GMSWWRL"/>
<dbReference type="OrthoDB" id="10251424at2759"/>
<dbReference type="PhylomeDB" id="P98080"/>
<dbReference type="Reactome" id="R-CEL-611105">
    <property type="pathway name" value="Respiratory electron transport"/>
</dbReference>
<dbReference type="Reactome" id="R-CEL-9865881">
    <property type="pathway name" value="Complex III assembly"/>
</dbReference>
<dbReference type="PRO" id="PR:P98080"/>
<dbReference type="Proteomes" id="UP000001940">
    <property type="component" value="Chromosome III"/>
</dbReference>
<dbReference type="Bgee" id="WBGene00018963">
    <property type="expression patterns" value="Expressed in pharyngeal muscle cell (C elegans) and 4 other cell types or tissues"/>
</dbReference>
<dbReference type="ExpressionAtlas" id="P98080">
    <property type="expression patterns" value="baseline and differential"/>
</dbReference>
<dbReference type="GO" id="GO:0005759">
    <property type="term" value="C:mitochondrial matrix"/>
    <property type="evidence" value="ECO:0007669"/>
    <property type="project" value="UniProtKB-SubCell"/>
</dbReference>
<dbReference type="GO" id="GO:0005739">
    <property type="term" value="C:mitochondrion"/>
    <property type="evidence" value="ECO:0007005"/>
    <property type="project" value="WormBase"/>
</dbReference>
<dbReference type="GO" id="GO:0046872">
    <property type="term" value="F:metal ion binding"/>
    <property type="evidence" value="ECO:0007669"/>
    <property type="project" value="InterPro"/>
</dbReference>
<dbReference type="GO" id="GO:0004222">
    <property type="term" value="F:metalloendopeptidase activity"/>
    <property type="evidence" value="ECO:0007669"/>
    <property type="project" value="InterPro"/>
</dbReference>
<dbReference type="GO" id="GO:0006508">
    <property type="term" value="P:proteolysis"/>
    <property type="evidence" value="ECO:0007669"/>
    <property type="project" value="InterPro"/>
</dbReference>
<dbReference type="FunFam" id="3.30.830.10:FF:000008">
    <property type="entry name" value="Mitochondrial-processing peptidase subunit beta"/>
    <property type="match status" value="1"/>
</dbReference>
<dbReference type="FunFam" id="3.30.830.10:FF:000001">
    <property type="entry name" value="Mitochondrial-processing peptidase subunit beta, mitochondrial"/>
    <property type="match status" value="1"/>
</dbReference>
<dbReference type="Gene3D" id="3.30.830.10">
    <property type="entry name" value="Metalloenzyme, LuxS/M16 peptidase-like"/>
    <property type="match status" value="2"/>
</dbReference>
<dbReference type="InterPro" id="IPR011249">
    <property type="entry name" value="Metalloenz_LuxS/M16"/>
</dbReference>
<dbReference type="InterPro" id="IPR050361">
    <property type="entry name" value="MPP/UQCRC_Complex"/>
</dbReference>
<dbReference type="InterPro" id="IPR011765">
    <property type="entry name" value="Pept_M16_N"/>
</dbReference>
<dbReference type="InterPro" id="IPR001431">
    <property type="entry name" value="Pept_M16_Zn_BS"/>
</dbReference>
<dbReference type="InterPro" id="IPR007863">
    <property type="entry name" value="Peptidase_M16_C"/>
</dbReference>
<dbReference type="PANTHER" id="PTHR11851:SF143">
    <property type="entry name" value="CYTOCHROME B-C1 COMPLEX SUBUNIT 1, MITOCHONDRIAL"/>
    <property type="match status" value="1"/>
</dbReference>
<dbReference type="PANTHER" id="PTHR11851">
    <property type="entry name" value="METALLOPROTEASE"/>
    <property type="match status" value="1"/>
</dbReference>
<dbReference type="Pfam" id="PF00675">
    <property type="entry name" value="Peptidase_M16"/>
    <property type="match status" value="1"/>
</dbReference>
<dbReference type="Pfam" id="PF05193">
    <property type="entry name" value="Peptidase_M16_C"/>
    <property type="match status" value="1"/>
</dbReference>
<dbReference type="SUPFAM" id="SSF63411">
    <property type="entry name" value="LuxS/MPP-like metallohydrolase"/>
    <property type="match status" value="2"/>
</dbReference>
<dbReference type="PROSITE" id="PS00143">
    <property type="entry name" value="INSULINASE"/>
    <property type="match status" value="1"/>
</dbReference>
<gene>
    <name type="primary">ucr-1</name>
    <name type="ORF">F56D2.1</name>
</gene>
<protein>
    <recommendedName>
        <fullName>Cytochrome b-c1 complex subunit 1, mitochondrial</fullName>
    </recommendedName>
    <alternativeName>
        <fullName>Ubiquinol-cytochrome-c reductase complex core protein 1</fullName>
    </alternativeName>
</protein>
<proteinExistence type="inferred from homology"/>
<name>UCR1_CAEEL</name>
<accession>P98080</accession>
<evidence type="ECO:0000305" key="1"/>
<comment type="subcellular location">
    <subcellularLocation>
        <location evidence="1">Mitochondrion matrix</location>
    </subcellularLocation>
</comment>
<comment type="similarity">
    <text evidence="1">Belongs to the peptidase M16 family.</text>
</comment>
<comment type="caution">
    <text evidence="1">Does not seem to have protease activity as it lacks the zinc-binding site.</text>
</comment>
<feature type="chain" id="PRO_0000074431" description="Cytochrome b-c1 complex subunit 1, mitochondrial">
    <location>
        <begin position="1"/>
        <end position="471"/>
    </location>
</feature>
<organism>
    <name type="scientific">Caenorhabditis elegans</name>
    <dbReference type="NCBI Taxonomy" id="6239"/>
    <lineage>
        <taxon>Eukaryota</taxon>
        <taxon>Metazoa</taxon>
        <taxon>Ecdysozoa</taxon>
        <taxon>Nematoda</taxon>
        <taxon>Chromadorea</taxon>
        <taxon>Rhabditida</taxon>
        <taxon>Rhabditina</taxon>
        <taxon>Rhabditomorpha</taxon>
        <taxon>Rhabditoidea</taxon>
        <taxon>Rhabditidae</taxon>
        <taxon>Peloderinae</taxon>
        <taxon>Caenorhabditis</taxon>
    </lineage>
</organism>
<keyword id="KW-0249">Electron transport</keyword>
<keyword id="KW-0496">Mitochondrion</keyword>
<keyword id="KW-1185">Reference proteome</keyword>
<keyword id="KW-0679">Respiratory chain</keyword>
<keyword id="KW-0813">Transport</keyword>
<sequence length="471" mass="51736">MALRLAVSSALRPALNSQVRNASSAVSVKDVLASAPQAEVTTLKNGFRVVTEDNGSATATVGVWIETGSRFENEKNNGVAHFLERLIHKGTGKRASAALESELNAIGAKLNSFTERDQTAVFVQAGAQDVEKVVDILADVLRNSKLEASTIDTERVNLLKELEASDDYHQLVLFDMLHAAGFQGTPLALSVLGTSESIPNISAQQLKEWQEDHYRPVRMVLSAVGGGVSNVSSLADKYFGDLSNEYPRKVPQVDGTRFTGSEYRYRNDNVPHMYAAFAVEGVGYAHKDALALQIANQFIGQWDVTHATSRTAASRLVQKIGHDHGVHNLQHFNINYKDTGLFGIYFVADAHDLNDTSGIMKSVAHEWKHLASAATEEEVAMAKNQFRTNLYQNLETNTQKAGFNAKELLYTGNLRQLSELEAQIQKVDAGAVREAISRHVYDRDLAAVGVGRTEAFPNYALTRAGMSWWRM</sequence>
<reference key="1">
    <citation type="journal article" date="1998" name="Science">
        <title>Genome sequence of the nematode C. elegans: a platform for investigating biology.</title>
        <authorList>
            <consortium name="The C. elegans sequencing consortium"/>
        </authorList>
    </citation>
    <scope>NUCLEOTIDE SEQUENCE [LARGE SCALE GENOMIC DNA]</scope>
    <source>
        <strain>Bristol N2</strain>
    </source>
</reference>